<reference key="1">
    <citation type="journal article" date="1997" name="Nature">
        <title>The nucleotide sequence of Saccharomyces cerevisiae chromosome IV.</title>
        <authorList>
            <person name="Jacq C."/>
            <person name="Alt-Moerbe J."/>
            <person name="Andre B."/>
            <person name="Arnold W."/>
            <person name="Bahr A."/>
            <person name="Ballesta J.P.G."/>
            <person name="Bargues M."/>
            <person name="Baron L."/>
            <person name="Becker A."/>
            <person name="Biteau N."/>
            <person name="Bloecker H."/>
            <person name="Blugeon C."/>
            <person name="Boskovic J."/>
            <person name="Brandt P."/>
            <person name="Brueckner M."/>
            <person name="Buitrago M.J."/>
            <person name="Coster F."/>
            <person name="Delaveau T."/>
            <person name="del Rey F."/>
            <person name="Dujon B."/>
            <person name="Eide L.G."/>
            <person name="Garcia-Cantalejo J.M."/>
            <person name="Goffeau A."/>
            <person name="Gomez-Peris A."/>
            <person name="Granotier C."/>
            <person name="Hanemann V."/>
            <person name="Hankeln T."/>
            <person name="Hoheisel J.D."/>
            <person name="Jaeger W."/>
            <person name="Jimenez A."/>
            <person name="Jonniaux J.-L."/>
            <person name="Kraemer C."/>
            <person name="Kuester H."/>
            <person name="Laamanen P."/>
            <person name="Legros Y."/>
            <person name="Louis E.J."/>
            <person name="Moeller-Rieker S."/>
            <person name="Monnet A."/>
            <person name="Moro M."/>
            <person name="Mueller-Auer S."/>
            <person name="Nussbaumer B."/>
            <person name="Paricio N."/>
            <person name="Paulin L."/>
            <person name="Perea J."/>
            <person name="Perez-Alonso M."/>
            <person name="Perez-Ortin J.E."/>
            <person name="Pohl T.M."/>
            <person name="Prydz H."/>
            <person name="Purnelle B."/>
            <person name="Rasmussen S.W."/>
            <person name="Remacha M.A."/>
            <person name="Revuelta J.L."/>
            <person name="Rieger M."/>
            <person name="Salom D."/>
            <person name="Saluz H.P."/>
            <person name="Saiz J.E."/>
            <person name="Saren A.-M."/>
            <person name="Schaefer M."/>
            <person name="Scharfe M."/>
            <person name="Schmidt E.R."/>
            <person name="Schneider C."/>
            <person name="Scholler P."/>
            <person name="Schwarz S."/>
            <person name="Soler-Mira A."/>
            <person name="Urrestarazu L.A."/>
            <person name="Verhasselt P."/>
            <person name="Vissers S."/>
            <person name="Voet M."/>
            <person name="Volckaert G."/>
            <person name="Wagner G."/>
            <person name="Wambutt R."/>
            <person name="Wedler E."/>
            <person name="Wedler H."/>
            <person name="Woelfl S."/>
            <person name="Harris D.E."/>
            <person name="Bowman S."/>
            <person name="Brown D."/>
            <person name="Churcher C.M."/>
            <person name="Connor R."/>
            <person name="Dedman K."/>
            <person name="Gentles S."/>
            <person name="Hamlin N."/>
            <person name="Hunt S."/>
            <person name="Jones L."/>
            <person name="McDonald S."/>
            <person name="Murphy L.D."/>
            <person name="Niblett D."/>
            <person name="Odell C."/>
            <person name="Oliver K."/>
            <person name="Rajandream M.A."/>
            <person name="Richards C."/>
            <person name="Shore L."/>
            <person name="Walsh S.V."/>
            <person name="Barrell B.G."/>
            <person name="Dietrich F.S."/>
            <person name="Mulligan J.T."/>
            <person name="Allen E."/>
            <person name="Araujo R."/>
            <person name="Aviles E."/>
            <person name="Berno A."/>
            <person name="Carpenter J."/>
            <person name="Chen E."/>
            <person name="Cherry J.M."/>
            <person name="Chung E."/>
            <person name="Duncan M."/>
            <person name="Hunicke-Smith S."/>
            <person name="Hyman R.W."/>
            <person name="Komp C."/>
            <person name="Lashkari D."/>
            <person name="Lew H."/>
            <person name="Lin D."/>
            <person name="Mosedale D."/>
            <person name="Nakahara K."/>
            <person name="Namath A."/>
            <person name="Oefner P."/>
            <person name="Oh C."/>
            <person name="Petel F.X."/>
            <person name="Roberts D."/>
            <person name="Schramm S."/>
            <person name="Schroeder M."/>
            <person name="Shogren T."/>
            <person name="Shroff N."/>
            <person name="Winant A."/>
            <person name="Yelton M.A."/>
            <person name="Botstein D."/>
            <person name="Davis R.W."/>
            <person name="Johnston M."/>
            <person name="Andrews S."/>
            <person name="Brinkman R."/>
            <person name="Cooper J."/>
            <person name="Ding H."/>
            <person name="Du Z."/>
            <person name="Favello A."/>
            <person name="Fulton L."/>
            <person name="Gattung S."/>
            <person name="Greco T."/>
            <person name="Hallsworth K."/>
            <person name="Hawkins J."/>
            <person name="Hillier L.W."/>
            <person name="Jier M."/>
            <person name="Johnson D."/>
            <person name="Johnston L."/>
            <person name="Kirsten J."/>
            <person name="Kucaba T."/>
            <person name="Langston Y."/>
            <person name="Latreille P."/>
            <person name="Le T."/>
            <person name="Mardis E."/>
            <person name="Menezes S."/>
            <person name="Miller N."/>
            <person name="Nhan M."/>
            <person name="Pauley A."/>
            <person name="Peluso D."/>
            <person name="Rifkin L."/>
            <person name="Riles L."/>
            <person name="Taich A."/>
            <person name="Trevaskis E."/>
            <person name="Vignati D."/>
            <person name="Wilcox L."/>
            <person name="Wohldman P."/>
            <person name="Vaudin M."/>
            <person name="Wilson R."/>
            <person name="Waterston R."/>
            <person name="Albermann K."/>
            <person name="Hani J."/>
            <person name="Heumann K."/>
            <person name="Kleine K."/>
            <person name="Mewes H.-W."/>
            <person name="Zollner A."/>
            <person name="Zaccaria P."/>
        </authorList>
    </citation>
    <scope>NUCLEOTIDE SEQUENCE [LARGE SCALE GENOMIC DNA]</scope>
    <source>
        <strain>ATCC 204508 / S288c</strain>
    </source>
</reference>
<reference key="2">
    <citation type="journal article" date="2014" name="G3 (Bethesda)">
        <title>The reference genome sequence of Saccharomyces cerevisiae: Then and now.</title>
        <authorList>
            <person name="Engel S.R."/>
            <person name="Dietrich F.S."/>
            <person name="Fisk D.G."/>
            <person name="Binkley G."/>
            <person name="Balakrishnan R."/>
            <person name="Costanzo M.C."/>
            <person name="Dwight S.S."/>
            <person name="Hitz B.C."/>
            <person name="Karra K."/>
            <person name="Nash R.S."/>
            <person name="Weng S."/>
            <person name="Wong E.D."/>
            <person name="Lloyd P."/>
            <person name="Skrzypek M.S."/>
            <person name="Miyasato S.R."/>
            <person name="Simison M."/>
            <person name="Cherry J.M."/>
        </authorList>
    </citation>
    <scope>GENOME REANNOTATION</scope>
    <source>
        <strain>ATCC 204508 / S288c</strain>
    </source>
</reference>
<reference key="3">
    <citation type="journal article" date="1992" name="J. Biol. Chem.">
        <title>NH2-terminal acetylation of ribosomal proteins of Saccharomyces cerevisiae.</title>
        <authorList>
            <person name="Takakura H."/>
            <person name="Tsunasawa S."/>
            <person name="Miyagi M."/>
            <person name="Warner J.R."/>
        </authorList>
    </citation>
    <scope>PRELIMINARY PROTEIN SEQUENCE OF 2-26</scope>
    <scope>ACETYLATION AT SER-2 BY NATA</scope>
</reference>
<reference key="4">
    <citation type="journal article" date="1998" name="Yeast">
        <title>The list of cytoplasmic ribosomal proteins of Saccharomyces cerevisiae.</title>
        <authorList>
            <person name="Planta R.J."/>
            <person name="Mager W.H."/>
        </authorList>
    </citation>
    <scope>NOMENCLATURE</scope>
    <scope>SUBUNIT</scope>
</reference>
<reference key="5">
    <citation type="journal article" date="2003" name="Nature">
        <title>Global analysis of protein localization in budding yeast.</title>
        <authorList>
            <person name="Huh W.-K."/>
            <person name="Falvo J.V."/>
            <person name="Gerke L.C."/>
            <person name="Carroll A.S."/>
            <person name="Howson R.W."/>
            <person name="Weissman J.S."/>
            <person name="O'Shea E.K."/>
        </authorList>
    </citation>
    <scope>SUBCELLULAR LOCATION [LARGE SCALE ANALYSIS]</scope>
</reference>
<reference key="6">
    <citation type="journal article" date="2007" name="Proc. Natl. Acad. Sci. U.S.A.">
        <title>Analysis of phosphorylation sites on proteins from Saccharomyces cerevisiae by electron transfer dissociation (ETD) mass spectrometry.</title>
        <authorList>
            <person name="Chi A."/>
            <person name="Huttenhower C."/>
            <person name="Geer L.Y."/>
            <person name="Coon J.J."/>
            <person name="Syka J.E.P."/>
            <person name="Bai D.L."/>
            <person name="Shabanowitz J."/>
            <person name="Burke D.J."/>
            <person name="Troyanskaya O.G."/>
            <person name="Hunt D.F."/>
        </authorList>
    </citation>
    <scope>PHOSPHORYLATION [LARGE SCALE ANALYSIS] AT SER-61; THR-70 AND SER-76</scope>
    <scope>IDENTIFICATION BY MASS SPECTROMETRY [LARGE SCALE ANALYSIS]</scope>
</reference>
<reference key="7">
    <citation type="journal article" date="2008" name="Mol. Cell. Proteomics">
        <title>A multidimensional chromatography technology for in-depth phosphoproteome analysis.</title>
        <authorList>
            <person name="Albuquerque C.P."/>
            <person name="Smolka M.B."/>
            <person name="Payne S.H."/>
            <person name="Bafna V."/>
            <person name="Eng J."/>
            <person name="Zhou H."/>
        </authorList>
    </citation>
    <scope>PHOSPHORYLATION [LARGE SCALE ANALYSIS] AT SER-34</scope>
    <scope>IDENTIFICATION BY MASS SPECTROMETRY [LARGE SCALE ANALYSIS]</scope>
</reference>
<reference key="8">
    <citation type="journal article" date="2009" name="Science">
        <title>Global analysis of Cdk1 substrate phosphorylation sites provides insights into evolution.</title>
        <authorList>
            <person name="Holt L.J."/>
            <person name="Tuch B.B."/>
            <person name="Villen J."/>
            <person name="Johnson A.D."/>
            <person name="Gygi S.P."/>
            <person name="Morgan D.O."/>
        </authorList>
    </citation>
    <scope>PHOSPHORYLATION [LARGE SCALE ANALYSIS] AT SER-34</scope>
    <scope>IDENTIFICATION BY MASS SPECTROMETRY [LARGE SCALE ANALYSIS]</scope>
</reference>
<reference key="9">
    <citation type="journal article" date="2011" name="Science">
        <title>The structure of the eukaryotic ribosome at 3.0 A resolution.</title>
        <authorList>
            <person name="Ben-Shem A."/>
            <person name="Garreau de Loubresse N."/>
            <person name="Melnikov S."/>
            <person name="Jenner L."/>
            <person name="Yusupova G."/>
            <person name="Yusupov M."/>
        </authorList>
    </citation>
    <scope>SUBUNIT</scope>
    <scope>SUBCELLULAR LOCATION</scope>
</reference>
<reference key="10">
    <citation type="journal article" date="2012" name="Proteomics">
        <title>Sites of ubiquitin attachment in Saccharomyces cerevisiae.</title>
        <authorList>
            <person name="Starita L.M."/>
            <person name="Lo R.S."/>
            <person name="Eng J.K."/>
            <person name="von Haller P.D."/>
            <person name="Fields S."/>
        </authorList>
    </citation>
    <scope>UBIQUITINATION [LARGE SCALE ANALYSIS] AT LYS-30; LYS-47 AND LYS-59</scope>
    <scope>IDENTIFICATION BY MASS SPECTROMETRY [LARGE SCALE ANALYSIS]</scope>
</reference>
<reference key="11">
    <citation type="journal article" date="2014" name="Curr. Opin. Struct. Biol.">
        <title>A new system for naming ribosomal proteins.</title>
        <authorList>
            <person name="Ban N."/>
            <person name="Beckmann R."/>
            <person name="Cate J.H.D."/>
            <person name="Dinman J.D."/>
            <person name="Dragon F."/>
            <person name="Ellis S.R."/>
            <person name="Lafontaine D.L.J."/>
            <person name="Lindahl L."/>
            <person name="Liljas A."/>
            <person name="Lipton J.M."/>
            <person name="McAlear M.A."/>
            <person name="Moore P.B."/>
            <person name="Noller H.F."/>
            <person name="Ortega J."/>
            <person name="Panse V.G."/>
            <person name="Ramakrishnan V."/>
            <person name="Spahn C.M.T."/>
            <person name="Steitz T.A."/>
            <person name="Tchorzewski M."/>
            <person name="Tollervey D."/>
            <person name="Warren A.J."/>
            <person name="Williamson J.R."/>
            <person name="Wilson D."/>
            <person name="Yonath A."/>
            <person name="Yusupov M."/>
        </authorList>
    </citation>
    <scope>NOMENCLATURE</scope>
</reference>
<reference key="12">
    <citation type="journal article" date="2001" name="Cell">
        <title>Structure of the 80S ribosome from Saccharomyces cerevisiae -- tRNA-ribosome and subunit-subunit interactions.</title>
        <authorList>
            <person name="Spahn C.M.T."/>
            <person name="Beckmann R."/>
            <person name="Eswar N."/>
            <person name="Penczek P.A."/>
            <person name="Sali A."/>
            <person name="Blobel G."/>
            <person name="Frank J."/>
        </authorList>
    </citation>
    <scope>3D-STRUCTURE MODELING OF 5-143</scope>
    <scope>ELECTRON MICROSCOPY</scope>
</reference>
<reference key="13">
    <citation type="journal article" date="2004" name="EMBO J.">
        <title>Domain movements of elongation factor eEF2 and the eukaryotic 80S ribosome facilitate tRNA translocation.</title>
        <authorList>
            <person name="Spahn C.M.T."/>
            <person name="Gomez-Lorenzo M.G."/>
            <person name="Grassucci R.A."/>
            <person name="Joergensen R."/>
            <person name="Andersen G.R."/>
            <person name="Beckmann R."/>
            <person name="Penczek P.A."/>
            <person name="Ballesta J.P.G."/>
            <person name="Frank J."/>
        </authorList>
    </citation>
    <scope>3D-STRUCTURE MODELING</scope>
    <scope>ELECTRON MICROSCOPY</scope>
</reference>
<organism>
    <name type="scientific">Saccharomyces cerevisiae (strain ATCC 204508 / S288c)</name>
    <name type="common">Baker's yeast</name>
    <dbReference type="NCBI Taxonomy" id="559292"/>
    <lineage>
        <taxon>Eukaryota</taxon>
        <taxon>Fungi</taxon>
        <taxon>Dikarya</taxon>
        <taxon>Ascomycota</taxon>
        <taxon>Saccharomycotina</taxon>
        <taxon>Saccharomycetes</taxon>
        <taxon>Saccharomycetales</taxon>
        <taxon>Saccharomycetaceae</taxon>
        <taxon>Saccharomyces</taxon>
    </lineage>
</organism>
<gene>
    <name evidence="6" type="primary">RPS16B</name>
    <name type="ordered locus">YDL083C</name>
</gene>
<accession>P0CX52</accession>
<accession>D6VRR6</accession>
<accession>P26787</accession>
<accession>P40213</accession>
<comment type="function">
    <text evidence="8">Component of the ribosome, a large ribonucleoprotein complex responsible for the synthesis of proteins in the cell. The small ribosomal subunit (SSU) binds messenger RNAs (mRNAs) and translates the encoded message by selecting cognate aminoacyl-transfer RNA (tRNA) molecules. The large subunit (LSU) contains the ribosomal catalytic site termed the peptidyl transferase center (PTC), which catalyzes the formation of peptide bonds, thereby polymerizing the amino acids delivered by tRNAs into a polypeptide chain. The nascent polypeptides leave the ribosome through a tunnel in the LSU and interact with protein factors that function in enzymatic processing, targeting, and the membrane insertion of nascent chains at the exit of the ribosomal tunnel.</text>
</comment>
<comment type="subunit">
    <text evidence="4 9">Component of the small ribosomal subunit (SSU). Mature yeast ribosomes consist of a small (40S) and a large (60S) subunit. The 40S small subunit contains 1 molecule of ribosomal RNA (18S rRNA) and 33 different proteins (encoded by 57 genes). The large 60S subunit contains 3 rRNA molecules (25S, 5.8S and 5S rRNA) and 46 different proteins (encoded by 81 genes) (PubMed:22096102, PubMed:9559554).</text>
</comment>
<comment type="subcellular location">
    <subcellularLocation>
        <location evidence="2 4">Cytoplasm</location>
    </subcellularLocation>
</comment>
<comment type="miscellaneous">
    <text evidence="7">There are 2 genes for uS9 in yeast.</text>
</comment>
<comment type="similarity">
    <text evidence="7">Belongs to the universal ribosomal protein uS9 family.</text>
</comment>
<evidence type="ECO:0000256" key="1">
    <source>
        <dbReference type="SAM" id="MobiDB-lite"/>
    </source>
</evidence>
<evidence type="ECO:0000269" key="2">
    <source>
    </source>
</evidence>
<evidence type="ECO:0000269" key="3">
    <source>
    </source>
</evidence>
<evidence type="ECO:0000269" key="4">
    <source>
    </source>
</evidence>
<evidence type="ECO:0000303" key="5">
    <source>
    </source>
</evidence>
<evidence type="ECO:0000303" key="6">
    <source>
    </source>
</evidence>
<evidence type="ECO:0000305" key="7"/>
<evidence type="ECO:0000305" key="8">
    <source>
    </source>
</evidence>
<evidence type="ECO:0000305" key="9">
    <source>
    </source>
</evidence>
<evidence type="ECO:0007744" key="10">
    <source>
    </source>
</evidence>
<evidence type="ECO:0007744" key="11">
    <source>
    </source>
</evidence>
<evidence type="ECO:0007744" key="12">
    <source>
    </source>
</evidence>
<evidence type="ECO:0007744" key="13">
    <source>
    </source>
</evidence>
<proteinExistence type="evidence at protein level"/>
<keyword id="KW-0007">Acetylation</keyword>
<keyword id="KW-0963">Cytoplasm</keyword>
<keyword id="KW-0903">Direct protein sequencing</keyword>
<keyword id="KW-1017">Isopeptide bond</keyword>
<keyword id="KW-0597">Phosphoprotein</keyword>
<keyword id="KW-1185">Reference proteome</keyword>
<keyword id="KW-0687">Ribonucleoprotein</keyword>
<keyword id="KW-0689">Ribosomal protein</keyword>
<keyword id="KW-0832">Ubl conjugation</keyword>
<protein>
    <recommendedName>
        <fullName evidence="5">Small ribosomal subunit protein uS9B</fullName>
    </recommendedName>
    <alternativeName>
        <fullName evidence="6">40S ribosomal protein S16-B</fullName>
    </alternativeName>
    <alternativeName>
        <fullName>RP61R</fullName>
    </alternativeName>
</protein>
<feature type="initiator methionine" description="Removed" evidence="3">
    <location>
        <position position="1"/>
    </location>
</feature>
<feature type="chain" id="PRO_0000409772" description="Small ribosomal subunit protein uS9B">
    <location>
        <begin position="2"/>
        <end position="143"/>
    </location>
</feature>
<feature type="region of interest" description="Disordered" evidence="1">
    <location>
        <begin position="123"/>
        <end position="143"/>
    </location>
</feature>
<feature type="compositionally biased region" description="Basic residues" evidence="1">
    <location>
        <begin position="134"/>
        <end position="143"/>
    </location>
</feature>
<feature type="modified residue" description="N-acetylserine" evidence="3">
    <location>
        <position position="2"/>
    </location>
</feature>
<feature type="modified residue" description="Phosphoserine" evidence="11 12">
    <location>
        <position position="34"/>
    </location>
</feature>
<feature type="modified residue" description="Phosphoserine" evidence="10">
    <location>
        <position position="61"/>
    </location>
</feature>
<feature type="modified residue" description="Phosphothreonine" evidence="10">
    <location>
        <position position="70"/>
    </location>
</feature>
<feature type="modified residue" description="Phosphoserine" evidence="10">
    <location>
        <position position="76"/>
    </location>
</feature>
<feature type="cross-link" description="Glycyl lysine isopeptide (Lys-Gly) (interchain with G-Cter in ubiquitin)" evidence="13">
    <location>
        <position position="30"/>
    </location>
</feature>
<feature type="cross-link" description="Glycyl lysine isopeptide (Lys-Gly) (interchain with G-Cter in ubiquitin)" evidence="13">
    <location>
        <position position="47"/>
    </location>
</feature>
<feature type="cross-link" description="Glycyl lysine isopeptide (Lys-Gly) (interchain with G-Cter in ubiquitin)" evidence="13">
    <location>
        <position position="59"/>
    </location>
</feature>
<name>RS16B_YEAST</name>
<sequence length="143" mass="15847">MSAVPSVQTFGKKKSATAVAHVKAGKGLIKVNGSPITLVEPEILRFKVYEPLLLVGLDKFSNIDIRVRVTGGGHVSQVYAIRQAIAKGLVAYHQKYVDEQSKNELKKAFTSYDRTLLIADSRRPEPKKFGGKGARSRFQKSYR</sequence>
<dbReference type="EMBL" id="Z74131">
    <property type="protein sequence ID" value="CAA98649.1"/>
    <property type="molecule type" value="Genomic_DNA"/>
</dbReference>
<dbReference type="EMBL" id="BK006938">
    <property type="protein sequence ID" value="DAA11776.1"/>
    <property type="molecule type" value="Genomic_DNA"/>
</dbReference>
<dbReference type="PIR" id="S67619">
    <property type="entry name" value="S67619"/>
</dbReference>
<dbReference type="RefSeq" id="NP_010200.1">
    <property type="nucleotide sequence ID" value="NM_001180142.1"/>
</dbReference>
<dbReference type="SMR" id="P0CX52"/>
<dbReference type="BioGRID" id="31978">
    <property type="interactions" value="300"/>
</dbReference>
<dbReference type="BioGRID" id="35319">
    <property type="interactions" value="369"/>
</dbReference>
<dbReference type="ComplexPortal" id="CPX-1599">
    <property type="entry name" value="40S cytosolic small ribosomal subunit"/>
</dbReference>
<dbReference type="FunCoup" id="P0CX52">
    <property type="interactions" value="794"/>
</dbReference>
<dbReference type="IntAct" id="P0CX52">
    <property type="interactions" value="6"/>
</dbReference>
<dbReference type="MINT" id="P0CX52"/>
<dbReference type="CarbonylDB" id="P0CX52"/>
<dbReference type="iPTMnet" id="P0CX52"/>
<dbReference type="EnsemblFungi" id="YDL083C_mRNA">
    <property type="protein sequence ID" value="YDL083C"/>
    <property type="gene ID" value="YDL083C"/>
</dbReference>
<dbReference type="EnsemblFungi" id="YMR143W_mRNA">
    <property type="protein sequence ID" value="YMR143W"/>
    <property type="gene ID" value="YMR143W"/>
</dbReference>
<dbReference type="GeneID" id="851476"/>
<dbReference type="KEGG" id="sce:YDL083C"/>
<dbReference type="KEGG" id="sce:YMR143W"/>
<dbReference type="AGR" id="SGD:S000002241"/>
<dbReference type="SGD" id="S000002241">
    <property type="gene designation" value="RPS16B"/>
</dbReference>
<dbReference type="VEuPathDB" id="FungiDB:YDL083C"/>
<dbReference type="VEuPathDB" id="FungiDB:YMR143W"/>
<dbReference type="GeneTree" id="ENSGT00390000013067"/>
<dbReference type="HOGENOM" id="CLU_046483_4_0_1"/>
<dbReference type="InParanoid" id="P0CX52"/>
<dbReference type="OMA" id="WPIEMAR"/>
<dbReference type="OrthoDB" id="426865at2759"/>
<dbReference type="BioCyc" id="YEAST:G3O-29492-MONOMER"/>
<dbReference type="Reactome" id="R-SCE-156827">
    <property type="pathway name" value="L13a-mediated translational silencing of Ceruloplasmin expression"/>
</dbReference>
<dbReference type="Reactome" id="R-SCE-1799339">
    <property type="pathway name" value="SRP-dependent cotranslational protein targeting to membrane"/>
</dbReference>
<dbReference type="Reactome" id="R-SCE-72649">
    <property type="pathway name" value="Translation initiation complex formation"/>
</dbReference>
<dbReference type="Reactome" id="R-SCE-72689">
    <property type="pathway name" value="Formation of a pool of free 40S subunits"/>
</dbReference>
<dbReference type="Reactome" id="R-SCE-72695">
    <property type="pathway name" value="Formation of the ternary complex, and subsequently, the 43S complex"/>
</dbReference>
<dbReference type="Reactome" id="R-SCE-72702">
    <property type="pathway name" value="Ribosomal scanning and start codon recognition"/>
</dbReference>
<dbReference type="Reactome" id="R-SCE-72706">
    <property type="pathway name" value="GTP hydrolysis and joining of the 60S ribosomal subunit"/>
</dbReference>
<dbReference type="Reactome" id="R-SCE-975956">
    <property type="pathway name" value="Nonsense Mediated Decay (NMD) independent of the Exon Junction Complex (EJC)"/>
</dbReference>
<dbReference type="Reactome" id="R-SCE-975957">
    <property type="pathway name" value="Nonsense Mediated Decay (NMD) enhanced by the Exon Junction Complex (EJC)"/>
</dbReference>
<dbReference type="BioGRID-ORCS" id="851476">
    <property type="hits" value="4 hits in 10 CRISPR screens"/>
</dbReference>
<dbReference type="BioGRID-ORCS" id="855174">
    <property type="hits" value="3 hits in 10 CRISPR screens"/>
</dbReference>
<dbReference type="PRO" id="PR:P0CX52"/>
<dbReference type="Proteomes" id="UP000002311">
    <property type="component" value="Chromosome IV"/>
</dbReference>
<dbReference type="RNAct" id="P0CX52">
    <property type="molecule type" value="protein"/>
</dbReference>
<dbReference type="ExpressionAtlas" id="P0CX52">
    <property type="expression patterns" value="baseline and differential"/>
</dbReference>
<dbReference type="GO" id="GO:0005829">
    <property type="term" value="C:cytosol"/>
    <property type="evidence" value="ECO:0000304"/>
    <property type="project" value="Reactome"/>
</dbReference>
<dbReference type="GO" id="GO:0022627">
    <property type="term" value="C:cytosolic small ribosomal subunit"/>
    <property type="evidence" value="ECO:0000318"/>
    <property type="project" value="GO_Central"/>
</dbReference>
<dbReference type="GO" id="GO:0003723">
    <property type="term" value="F:RNA binding"/>
    <property type="evidence" value="ECO:0000318"/>
    <property type="project" value="GO_Central"/>
</dbReference>
<dbReference type="GO" id="GO:0003735">
    <property type="term" value="F:structural constituent of ribosome"/>
    <property type="evidence" value="ECO:0000318"/>
    <property type="project" value="GO_Central"/>
</dbReference>
<dbReference type="GO" id="GO:0000462">
    <property type="term" value="P:maturation of SSU-rRNA from tricistronic rRNA transcript (SSU-rRNA, 5.8S rRNA, LSU-rRNA)"/>
    <property type="evidence" value="ECO:0000316"/>
    <property type="project" value="SGD"/>
</dbReference>
<dbReference type="GO" id="GO:0006413">
    <property type="term" value="P:translational initiation"/>
    <property type="evidence" value="ECO:0000316"/>
    <property type="project" value="SGD"/>
</dbReference>
<dbReference type="FunFam" id="3.30.230.10:FF:000007">
    <property type="entry name" value="40S ribosomal protein S16"/>
    <property type="match status" value="1"/>
</dbReference>
<dbReference type="Gene3D" id="3.30.230.10">
    <property type="match status" value="1"/>
</dbReference>
<dbReference type="InterPro" id="IPR020568">
    <property type="entry name" value="Ribosomal_Su5_D2-typ_SF"/>
</dbReference>
<dbReference type="InterPro" id="IPR000754">
    <property type="entry name" value="Ribosomal_uS9"/>
</dbReference>
<dbReference type="InterPro" id="IPR020574">
    <property type="entry name" value="Ribosomal_uS9_CS"/>
</dbReference>
<dbReference type="InterPro" id="IPR014721">
    <property type="entry name" value="Ribsml_uS5_D2-typ_fold_subgr"/>
</dbReference>
<dbReference type="NCBIfam" id="NF001749">
    <property type="entry name" value="PRK00474.1"/>
    <property type="match status" value="1"/>
</dbReference>
<dbReference type="PANTHER" id="PTHR21569:SF16">
    <property type="entry name" value="RIBOSOMAL PROTEIN S16"/>
    <property type="match status" value="1"/>
</dbReference>
<dbReference type="PANTHER" id="PTHR21569">
    <property type="entry name" value="RIBOSOMAL PROTEIN S9"/>
    <property type="match status" value="1"/>
</dbReference>
<dbReference type="Pfam" id="PF00380">
    <property type="entry name" value="Ribosomal_S9"/>
    <property type="match status" value="1"/>
</dbReference>
<dbReference type="SUPFAM" id="SSF54211">
    <property type="entry name" value="Ribosomal protein S5 domain 2-like"/>
    <property type="match status" value="1"/>
</dbReference>
<dbReference type="PROSITE" id="PS00360">
    <property type="entry name" value="RIBOSOMAL_S9"/>
    <property type="match status" value="1"/>
</dbReference>